<protein>
    <recommendedName>
        <fullName>Probable quinol oxidase subunit 2</fullName>
        <ecNumber>1.10.3.-</ecNumber>
    </recommendedName>
    <alternativeName>
        <fullName>Quinol oxidase polypeptide II</fullName>
    </alternativeName>
</protein>
<accession>Q2YX14</accession>
<feature type="signal peptide" evidence="3">
    <location>
        <begin position="1"/>
        <end position="19"/>
    </location>
</feature>
<feature type="chain" id="PRO_0000275871" description="Probable quinol oxidase subunit 2">
    <location>
        <begin position="20"/>
        <end position="366"/>
    </location>
</feature>
<feature type="transmembrane region" description="Helical" evidence="2">
    <location>
        <begin position="38"/>
        <end position="58"/>
    </location>
</feature>
<feature type="transmembrane region" description="Helical" evidence="2">
    <location>
        <begin position="80"/>
        <end position="100"/>
    </location>
</feature>
<feature type="region of interest" description="Disordered" evidence="4">
    <location>
        <begin position="330"/>
        <end position="366"/>
    </location>
</feature>
<feature type="compositionally biased region" description="Basic and acidic residues" evidence="4">
    <location>
        <begin position="335"/>
        <end position="366"/>
    </location>
</feature>
<feature type="lipid moiety-binding region" description="N-palmitoyl cysteine" evidence="3">
    <location>
        <position position="20"/>
    </location>
</feature>
<feature type="lipid moiety-binding region" description="S-diacylglycerol cysteine" evidence="3">
    <location>
        <position position="20"/>
    </location>
</feature>
<comment type="function">
    <text evidence="1">Catalyzes quinol oxidation with the concomitant reduction of oxygen to water. Subunit II transfers the electrons from a quinol to the binuclear center of the catalytic subunit I (By similarity).</text>
</comment>
<comment type="catalytic activity">
    <reaction>
        <text>2 a quinol + O2 = 2 a quinone + 2 H2O</text>
        <dbReference type="Rhea" id="RHEA:55376"/>
        <dbReference type="ChEBI" id="CHEBI:15377"/>
        <dbReference type="ChEBI" id="CHEBI:15379"/>
        <dbReference type="ChEBI" id="CHEBI:24646"/>
        <dbReference type="ChEBI" id="CHEBI:132124"/>
    </reaction>
</comment>
<comment type="subcellular location">
    <subcellularLocation>
        <location evidence="3">Cell membrane</location>
        <topology evidence="1">Multi-pass membrane protein</topology>
    </subcellularLocation>
</comment>
<comment type="similarity">
    <text evidence="5">Belongs to the cytochrome c oxidase subunit 2 family.</text>
</comment>
<evidence type="ECO:0000250" key="1"/>
<evidence type="ECO:0000255" key="2"/>
<evidence type="ECO:0000255" key="3">
    <source>
        <dbReference type="PROSITE-ProRule" id="PRU00303"/>
    </source>
</evidence>
<evidence type="ECO:0000256" key="4">
    <source>
        <dbReference type="SAM" id="MobiDB-lite"/>
    </source>
</evidence>
<evidence type="ECO:0000305" key="5"/>
<keyword id="KW-1003">Cell membrane</keyword>
<keyword id="KW-0249">Electron transport</keyword>
<keyword id="KW-0449">Lipoprotein</keyword>
<keyword id="KW-0472">Membrane</keyword>
<keyword id="KW-0560">Oxidoreductase</keyword>
<keyword id="KW-0564">Palmitate</keyword>
<keyword id="KW-0679">Respiratory chain</keyword>
<keyword id="KW-0732">Signal</keyword>
<keyword id="KW-0812">Transmembrane</keyword>
<keyword id="KW-1133">Transmembrane helix</keyword>
<keyword id="KW-0813">Transport</keyword>
<dbReference type="EC" id="1.10.3.-"/>
<dbReference type="EMBL" id="AJ938182">
    <property type="protein sequence ID" value="CAI80615.1"/>
    <property type="molecule type" value="Genomic_DNA"/>
</dbReference>
<dbReference type="RefSeq" id="WP_000032837.1">
    <property type="nucleotide sequence ID" value="NC_007622.1"/>
</dbReference>
<dbReference type="SMR" id="Q2YX14"/>
<dbReference type="KEGG" id="sab:SAB0927c"/>
<dbReference type="HOGENOM" id="CLU_036876_6_0_9"/>
<dbReference type="GO" id="GO:0005886">
    <property type="term" value="C:plasma membrane"/>
    <property type="evidence" value="ECO:0007669"/>
    <property type="project" value="UniProtKB-SubCell"/>
</dbReference>
<dbReference type="GO" id="GO:0005507">
    <property type="term" value="F:copper ion binding"/>
    <property type="evidence" value="ECO:0007669"/>
    <property type="project" value="InterPro"/>
</dbReference>
<dbReference type="GO" id="GO:0009486">
    <property type="term" value="F:cytochrome bo3 ubiquinol oxidase activity"/>
    <property type="evidence" value="ECO:0007669"/>
    <property type="project" value="InterPro"/>
</dbReference>
<dbReference type="GO" id="GO:0004129">
    <property type="term" value="F:cytochrome-c oxidase activity"/>
    <property type="evidence" value="ECO:0007669"/>
    <property type="project" value="InterPro"/>
</dbReference>
<dbReference type="GO" id="GO:0016682">
    <property type="term" value="F:oxidoreductase activity, acting on diphenols and related substances as donors, oxygen as acceptor"/>
    <property type="evidence" value="ECO:0007669"/>
    <property type="project" value="InterPro"/>
</dbReference>
<dbReference type="GO" id="GO:0042773">
    <property type="term" value="P:ATP synthesis coupled electron transport"/>
    <property type="evidence" value="ECO:0007669"/>
    <property type="project" value="TreeGrafter"/>
</dbReference>
<dbReference type="CDD" id="cd04212">
    <property type="entry name" value="CuRO_UO_II"/>
    <property type="match status" value="1"/>
</dbReference>
<dbReference type="FunFam" id="2.60.40.420:FF:000014">
    <property type="entry name" value="Quinol oxidase subunit 2"/>
    <property type="match status" value="1"/>
</dbReference>
<dbReference type="Gene3D" id="1.10.287.90">
    <property type="match status" value="1"/>
</dbReference>
<dbReference type="Gene3D" id="2.60.40.420">
    <property type="entry name" value="Cupredoxins - blue copper proteins"/>
    <property type="match status" value="1"/>
</dbReference>
<dbReference type="InterPro" id="IPR045187">
    <property type="entry name" value="CcO_II"/>
</dbReference>
<dbReference type="InterPro" id="IPR002429">
    <property type="entry name" value="CcO_II-like_C"/>
</dbReference>
<dbReference type="InterPro" id="IPR008972">
    <property type="entry name" value="Cupredoxin"/>
</dbReference>
<dbReference type="InterPro" id="IPR034227">
    <property type="entry name" value="CuRO_UO_II"/>
</dbReference>
<dbReference type="InterPro" id="IPR011759">
    <property type="entry name" value="Cyt_c_oxidase_su2_TM_dom"/>
</dbReference>
<dbReference type="InterPro" id="IPR036257">
    <property type="entry name" value="Cyt_c_oxidase_su2_TM_sf"/>
</dbReference>
<dbReference type="InterPro" id="IPR006332">
    <property type="entry name" value="QoxA"/>
</dbReference>
<dbReference type="NCBIfam" id="TIGR01432">
    <property type="entry name" value="QOXA"/>
    <property type="match status" value="1"/>
</dbReference>
<dbReference type="PANTHER" id="PTHR22888:SF18">
    <property type="entry name" value="CYTOCHROME BO(3) UBIQUINOL OXIDASE SUBUNIT 2"/>
    <property type="match status" value="1"/>
</dbReference>
<dbReference type="PANTHER" id="PTHR22888">
    <property type="entry name" value="CYTOCHROME C OXIDASE, SUBUNIT II"/>
    <property type="match status" value="1"/>
</dbReference>
<dbReference type="Pfam" id="PF02790">
    <property type="entry name" value="COX2_TM"/>
    <property type="match status" value="1"/>
</dbReference>
<dbReference type="SUPFAM" id="SSF49503">
    <property type="entry name" value="Cupredoxins"/>
    <property type="match status" value="1"/>
</dbReference>
<dbReference type="SUPFAM" id="SSF81464">
    <property type="entry name" value="Cytochrome c oxidase subunit II-like, transmembrane region"/>
    <property type="match status" value="1"/>
</dbReference>
<dbReference type="PROSITE" id="PS50857">
    <property type="entry name" value="COX2_CUA"/>
    <property type="match status" value="1"/>
</dbReference>
<dbReference type="PROSITE" id="PS50999">
    <property type="entry name" value="COX2_TM"/>
    <property type="match status" value="1"/>
</dbReference>
<dbReference type="PROSITE" id="PS51257">
    <property type="entry name" value="PROKAR_LIPOPROTEIN"/>
    <property type="match status" value="1"/>
</dbReference>
<reference key="1">
    <citation type="journal article" date="2007" name="PLoS ONE">
        <title>Molecular correlates of host specialization in Staphylococcus aureus.</title>
        <authorList>
            <person name="Herron-Olson L."/>
            <person name="Fitzgerald J.R."/>
            <person name="Musser J.M."/>
            <person name="Kapur V."/>
        </authorList>
    </citation>
    <scope>NUCLEOTIDE SEQUENCE [LARGE SCALE GENOMIC DNA]</scope>
    <source>
        <strain>bovine RF122 / ET3-1</strain>
    </source>
</reference>
<organism>
    <name type="scientific">Staphylococcus aureus (strain bovine RF122 / ET3-1)</name>
    <dbReference type="NCBI Taxonomy" id="273036"/>
    <lineage>
        <taxon>Bacteria</taxon>
        <taxon>Bacillati</taxon>
        <taxon>Bacillota</taxon>
        <taxon>Bacilli</taxon>
        <taxon>Bacillales</taxon>
        <taxon>Staphylococcaceae</taxon>
        <taxon>Staphylococcus</taxon>
    </lineage>
</organism>
<proteinExistence type="inferred from homology"/>
<gene>
    <name type="primary">qoxA</name>
    <name type="ordered locus">SAB0927c</name>
</gene>
<name>QOX2_STAAB</name>
<sequence>MSKFKSLLLLFGTLILLSGCSNIEIFNAKGPVASSQKFLILYSIVFMLVICFVVLGMFAIFIYKYSYNKNAESGKMHHNAIIETIWFVIPIIIVAALAIPTVKTLYDYEKPPKSEKDPMVVYAVSAGYKWFFAYPDEHIETVNTLTIPKDRPVVFKLQAMDTMTSFWIPQLGGQKYAMTGMTMNWTLEASQTGTFRGRNSNFNGEGFSRQTFKVNAVSQKDYDKWVKEVKGKKTLDQDTFDKQLLPSTPNKALEFNGTHMAFVDPAADPEYIFYAYKRFNFELKDPNFTSEENMFKDVSEKPLIPARKAQITNANYKRHGMKLMILGNDEPYNNEFKKDESKNAKEMKKISKDAQDQDNDDHGGGH</sequence>